<protein>
    <recommendedName>
        <fullName>Nitrogen fixation nifHD region GlnB-like protein 2</fullName>
    </recommendedName>
    <alternativeName>
        <fullName>ORF-122</fullName>
    </alternativeName>
</protein>
<proteinExistence type="inferred from homology"/>
<accession>P51604</accession>
<keyword id="KW-0535">Nitrogen fixation</keyword>
<keyword id="KW-0804">Transcription</keyword>
<keyword id="KW-0805">Transcription regulation</keyword>
<organism>
    <name type="scientific">Methanobacterium ivanovii</name>
    <dbReference type="NCBI Taxonomy" id="2163"/>
    <lineage>
        <taxon>Archaea</taxon>
        <taxon>Methanobacteriati</taxon>
        <taxon>Methanobacteriota</taxon>
        <taxon>Methanomada group</taxon>
        <taxon>Methanobacteria</taxon>
        <taxon>Methanobacteriales</taxon>
        <taxon>Methanobacteriaceae</taxon>
        <taxon>Methanobacterium</taxon>
    </lineage>
</organism>
<reference key="1">
    <citation type="journal article" date="1991" name="Res. Microbiol.">
        <title>Nucleotide sequence of nifH regions from Methanobacterium ivanovii and Methanosarcina barkeri 227 and characterization of glnB-like genes.</title>
        <authorList>
            <person name="Sibold L."/>
            <person name="Henriquet M."/>
            <person name="Possot O."/>
            <person name="Aubert J.-P."/>
        </authorList>
    </citation>
    <scope>NUCLEOTIDE SEQUENCE [GENOMIC DNA]</scope>
</reference>
<sequence length="122" mass="13507">MKEIIAIIRPNKINRTKEVLDALGFSSMTANAVFGRGRQKAIVGEVTFAIQNKDLREEEGSMRYIPKRMISLVVPDEDASLVVESIMKVNKTGQIGDGKIFVCPIEDAVRVRTKESGEDAIL</sequence>
<dbReference type="EMBL" id="X56071">
    <property type="protein sequence ID" value="CAA39550.1"/>
    <property type="molecule type" value="Genomic_DNA"/>
</dbReference>
<dbReference type="SMR" id="P51604"/>
<dbReference type="GO" id="GO:0005829">
    <property type="term" value="C:cytosol"/>
    <property type="evidence" value="ECO:0007669"/>
    <property type="project" value="TreeGrafter"/>
</dbReference>
<dbReference type="GO" id="GO:0005524">
    <property type="term" value="F:ATP binding"/>
    <property type="evidence" value="ECO:0007669"/>
    <property type="project" value="TreeGrafter"/>
</dbReference>
<dbReference type="GO" id="GO:0030234">
    <property type="term" value="F:enzyme regulator activity"/>
    <property type="evidence" value="ECO:0007669"/>
    <property type="project" value="InterPro"/>
</dbReference>
<dbReference type="GO" id="GO:0009399">
    <property type="term" value="P:nitrogen fixation"/>
    <property type="evidence" value="ECO:0007669"/>
    <property type="project" value="UniProtKB-KW"/>
</dbReference>
<dbReference type="GO" id="GO:0006808">
    <property type="term" value="P:regulation of nitrogen utilization"/>
    <property type="evidence" value="ECO:0007669"/>
    <property type="project" value="InterPro"/>
</dbReference>
<dbReference type="Gene3D" id="3.30.70.120">
    <property type="match status" value="1"/>
</dbReference>
<dbReference type="InterPro" id="IPR002187">
    <property type="entry name" value="N-reg_PII"/>
</dbReference>
<dbReference type="InterPro" id="IPR011322">
    <property type="entry name" value="N-reg_PII-like_a/b"/>
</dbReference>
<dbReference type="InterPro" id="IPR015867">
    <property type="entry name" value="N-reg_PII/ATP_PRibTrfase_C"/>
</dbReference>
<dbReference type="InterPro" id="IPR017918">
    <property type="entry name" value="N-reg_PII_CS"/>
</dbReference>
<dbReference type="PANTHER" id="PTHR30115">
    <property type="entry name" value="NITROGEN REGULATORY PROTEIN P-II"/>
    <property type="match status" value="1"/>
</dbReference>
<dbReference type="PANTHER" id="PTHR30115:SF11">
    <property type="entry name" value="NITROGEN REGULATORY PROTEIN P-II HOMOLOG"/>
    <property type="match status" value="1"/>
</dbReference>
<dbReference type="Pfam" id="PF00543">
    <property type="entry name" value="P-II"/>
    <property type="match status" value="1"/>
</dbReference>
<dbReference type="PRINTS" id="PR00340">
    <property type="entry name" value="PIIGLNB"/>
</dbReference>
<dbReference type="SMART" id="SM00938">
    <property type="entry name" value="P-II"/>
    <property type="match status" value="1"/>
</dbReference>
<dbReference type="SUPFAM" id="SSF54913">
    <property type="entry name" value="GlnB-like"/>
    <property type="match status" value="1"/>
</dbReference>
<dbReference type="PROSITE" id="PS00638">
    <property type="entry name" value="PII_GLNB_CTER"/>
    <property type="match status" value="1"/>
</dbReference>
<dbReference type="PROSITE" id="PS51343">
    <property type="entry name" value="PII_GLNB_DOM"/>
    <property type="match status" value="1"/>
</dbReference>
<gene>
    <name type="primary">glnBB</name>
</gene>
<evidence type="ECO:0000255" key="1">
    <source>
        <dbReference type="PROSITE-ProRule" id="PRU00675"/>
    </source>
</evidence>
<feature type="chain" id="PRO_0000139805" description="Nitrogen fixation nifHD region GlnB-like protein 2">
    <location>
        <begin position="1"/>
        <end position="122"/>
    </location>
</feature>
<name>GLNB2_METIV</name>
<comment type="function">
    <text>Could be involved in the regulation of nitrogen fixation.</text>
</comment>
<comment type="similarity">
    <text evidence="1">Belongs to the P(II) protein family.</text>
</comment>